<reference key="1">
    <citation type="journal article" date="2006" name="PLoS Genet.">
        <title>Secrets of soil survival revealed by the genome sequence of Arthrobacter aurescens TC1.</title>
        <authorList>
            <person name="Mongodin E.F."/>
            <person name="Shapir N."/>
            <person name="Daugherty S.C."/>
            <person name="DeBoy R.T."/>
            <person name="Emerson J.B."/>
            <person name="Shvartzbeyn A."/>
            <person name="Radune D."/>
            <person name="Vamathevan J."/>
            <person name="Riggs F."/>
            <person name="Grinberg V."/>
            <person name="Khouri H.M."/>
            <person name="Wackett L.P."/>
            <person name="Nelson K.E."/>
            <person name="Sadowsky M.J."/>
        </authorList>
    </citation>
    <scope>NUCLEOTIDE SEQUENCE [LARGE SCALE GENOMIC DNA]</scope>
    <source>
        <strain>TC1</strain>
    </source>
</reference>
<name>SYC_PAEAT</name>
<keyword id="KW-0030">Aminoacyl-tRNA synthetase</keyword>
<keyword id="KW-0067">ATP-binding</keyword>
<keyword id="KW-0963">Cytoplasm</keyword>
<keyword id="KW-0436">Ligase</keyword>
<keyword id="KW-0479">Metal-binding</keyword>
<keyword id="KW-0547">Nucleotide-binding</keyword>
<keyword id="KW-0648">Protein biosynthesis</keyword>
<keyword id="KW-0862">Zinc</keyword>
<gene>
    <name evidence="1" type="primary">cysS</name>
    <name type="ordered locus">AAur_0901</name>
</gene>
<feature type="chain" id="PRO_1000006561" description="Cysteine--tRNA ligase">
    <location>
        <begin position="1"/>
        <end position="484"/>
    </location>
</feature>
<feature type="short sequence motif" description="'HIGH' region">
    <location>
        <begin position="31"/>
        <end position="41"/>
    </location>
</feature>
<feature type="short sequence motif" description="'KMSKS' region">
    <location>
        <begin position="283"/>
        <end position="287"/>
    </location>
</feature>
<feature type="binding site" evidence="1">
    <location>
        <position position="29"/>
    </location>
    <ligand>
        <name>Zn(2+)</name>
        <dbReference type="ChEBI" id="CHEBI:29105"/>
    </ligand>
</feature>
<feature type="binding site" evidence="1">
    <location>
        <position position="227"/>
    </location>
    <ligand>
        <name>Zn(2+)</name>
        <dbReference type="ChEBI" id="CHEBI:29105"/>
    </ligand>
</feature>
<feature type="binding site" evidence="1">
    <location>
        <position position="252"/>
    </location>
    <ligand>
        <name>Zn(2+)</name>
        <dbReference type="ChEBI" id="CHEBI:29105"/>
    </ligand>
</feature>
<feature type="binding site" evidence="1">
    <location>
        <position position="256"/>
    </location>
    <ligand>
        <name>Zn(2+)</name>
        <dbReference type="ChEBI" id="CHEBI:29105"/>
    </ligand>
</feature>
<feature type="binding site" evidence="1">
    <location>
        <position position="286"/>
    </location>
    <ligand>
        <name>ATP</name>
        <dbReference type="ChEBI" id="CHEBI:30616"/>
    </ligand>
</feature>
<comment type="catalytic activity">
    <reaction evidence="1">
        <text>tRNA(Cys) + L-cysteine + ATP = L-cysteinyl-tRNA(Cys) + AMP + diphosphate</text>
        <dbReference type="Rhea" id="RHEA:17773"/>
        <dbReference type="Rhea" id="RHEA-COMP:9661"/>
        <dbReference type="Rhea" id="RHEA-COMP:9679"/>
        <dbReference type="ChEBI" id="CHEBI:30616"/>
        <dbReference type="ChEBI" id="CHEBI:33019"/>
        <dbReference type="ChEBI" id="CHEBI:35235"/>
        <dbReference type="ChEBI" id="CHEBI:78442"/>
        <dbReference type="ChEBI" id="CHEBI:78517"/>
        <dbReference type="ChEBI" id="CHEBI:456215"/>
        <dbReference type="EC" id="6.1.1.16"/>
    </reaction>
</comment>
<comment type="cofactor">
    <cofactor evidence="1">
        <name>Zn(2+)</name>
        <dbReference type="ChEBI" id="CHEBI:29105"/>
    </cofactor>
    <text evidence="1">Binds 1 zinc ion per subunit.</text>
</comment>
<comment type="subunit">
    <text evidence="1">Monomer.</text>
</comment>
<comment type="subcellular location">
    <subcellularLocation>
        <location evidence="1">Cytoplasm</location>
    </subcellularLocation>
</comment>
<comment type="similarity">
    <text evidence="1">Belongs to the class-I aminoacyl-tRNA synthetase family.</text>
</comment>
<organism>
    <name type="scientific">Paenarthrobacter aurescens (strain TC1)</name>
    <dbReference type="NCBI Taxonomy" id="290340"/>
    <lineage>
        <taxon>Bacteria</taxon>
        <taxon>Bacillati</taxon>
        <taxon>Actinomycetota</taxon>
        <taxon>Actinomycetes</taxon>
        <taxon>Micrococcales</taxon>
        <taxon>Micrococcaceae</taxon>
        <taxon>Paenarthrobacter</taxon>
    </lineage>
</organism>
<accession>A1R383</accession>
<evidence type="ECO:0000255" key="1">
    <source>
        <dbReference type="HAMAP-Rule" id="MF_00041"/>
    </source>
</evidence>
<dbReference type="EC" id="6.1.1.16" evidence="1"/>
<dbReference type="EMBL" id="CP000474">
    <property type="protein sequence ID" value="ABM06615.1"/>
    <property type="molecule type" value="Genomic_DNA"/>
</dbReference>
<dbReference type="RefSeq" id="WP_011773642.1">
    <property type="nucleotide sequence ID" value="NC_008711.1"/>
</dbReference>
<dbReference type="SMR" id="A1R383"/>
<dbReference type="STRING" id="290340.AAur_0901"/>
<dbReference type="KEGG" id="aau:AAur_0901"/>
<dbReference type="eggNOG" id="COG0215">
    <property type="taxonomic scope" value="Bacteria"/>
</dbReference>
<dbReference type="HOGENOM" id="CLU_013528_0_1_11"/>
<dbReference type="OrthoDB" id="9815130at2"/>
<dbReference type="Proteomes" id="UP000000637">
    <property type="component" value="Chromosome"/>
</dbReference>
<dbReference type="GO" id="GO:0005829">
    <property type="term" value="C:cytosol"/>
    <property type="evidence" value="ECO:0007669"/>
    <property type="project" value="TreeGrafter"/>
</dbReference>
<dbReference type="GO" id="GO:0005524">
    <property type="term" value="F:ATP binding"/>
    <property type="evidence" value="ECO:0007669"/>
    <property type="project" value="UniProtKB-UniRule"/>
</dbReference>
<dbReference type="GO" id="GO:0004817">
    <property type="term" value="F:cysteine-tRNA ligase activity"/>
    <property type="evidence" value="ECO:0007669"/>
    <property type="project" value="UniProtKB-UniRule"/>
</dbReference>
<dbReference type="GO" id="GO:0008270">
    <property type="term" value="F:zinc ion binding"/>
    <property type="evidence" value="ECO:0007669"/>
    <property type="project" value="UniProtKB-UniRule"/>
</dbReference>
<dbReference type="GO" id="GO:0006423">
    <property type="term" value="P:cysteinyl-tRNA aminoacylation"/>
    <property type="evidence" value="ECO:0007669"/>
    <property type="project" value="UniProtKB-UniRule"/>
</dbReference>
<dbReference type="CDD" id="cd00672">
    <property type="entry name" value="CysRS_core"/>
    <property type="match status" value="1"/>
</dbReference>
<dbReference type="FunFam" id="3.40.50.620:FF:000068">
    <property type="entry name" value="Cysteine--tRNA ligase"/>
    <property type="match status" value="1"/>
</dbReference>
<dbReference type="Gene3D" id="1.20.120.1910">
    <property type="entry name" value="Cysteine-tRNA ligase, C-terminal anti-codon recognition domain"/>
    <property type="match status" value="1"/>
</dbReference>
<dbReference type="Gene3D" id="3.40.50.620">
    <property type="entry name" value="HUPs"/>
    <property type="match status" value="1"/>
</dbReference>
<dbReference type="HAMAP" id="MF_00041">
    <property type="entry name" value="Cys_tRNA_synth"/>
    <property type="match status" value="1"/>
</dbReference>
<dbReference type="InterPro" id="IPR015803">
    <property type="entry name" value="Cys-tRNA-ligase"/>
</dbReference>
<dbReference type="InterPro" id="IPR015273">
    <property type="entry name" value="Cys-tRNA-synt_Ia_DALR"/>
</dbReference>
<dbReference type="InterPro" id="IPR024909">
    <property type="entry name" value="Cys-tRNA/MSH_ligase"/>
</dbReference>
<dbReference type="InterPro" id="IPR056411">
    <property type="entry name" value="CysS_C"/>
</dbReference>
<dbReference type="InterPro" id="IPR014729">
    <property type="entry name" value="Rossmann-like_a/b/a_fold"/>
</dbReference>
<dbReference type="InterPro" id="IPR032678">
    <property type="entry name" value="tRNA-synt_1_cat_dom"/>
</dbReference>
<dbReference type="InterPro" id="IPR009080">
    <property type="entry name" value="tRNAsynth_Ia_anticodon-bd"/>
</dbReference>
<dbReference type="NCBIfam" id="TIGR00435">
    <property type="entry name" value="cysS"/>
    <property type="match status" value="1"/>
</dbReference>
<dbReference type="PANTHER" id="PTHR10890:SF30">
    <property type="entry name" value="CYSTEINE--TRNA LIGASE"/>
    <property type="match status" value="1"/>
</dbReference>
<dbReference type="PANTHER" id="PTHR10890">
    <property type="entry name" value="CYSTEINYL-TRNA SYNTHETASE"/>
    <property type="match status" value="1"/>
</dbReference>
<dbReference type="Pfam" id="PF23493">
    <property type="entry name" value="CysS_C"/>
    <property type="match status" value="1"/>
</dbReference>
<dbReference type="Pfam" id="PF09190">
    <property type="entry name" value="DALR_2"/>
    <property type="match status" value="1"/>
</dbReference>
<dbReference type="Pfam" id="PF01406">
    <property type="entry name" value="tRNA-synt_1e"/>
    <property type="match status" value="1"/>
</dbReference>
<dbReference type="PRINTS" id="PR00983">
    <property type="entry name" value="TRNASYNTHCYS"/>
</dbReference>
<dbReference type="SMART" id="SM00840">
    <property type="entry name" value="DALR_2"/>
    <property type="match status" value="1"/>
</dbReference>
<dbReference type="SUPFAM" id="SSF47323">
    <property type="entry name" value="Anticodon-binding domain of a subclass of class I aminoacyl-tRNA synthetases"/>
    <property type="match status" value="1"/>
</dbReference>
<dbReference type="SUPFAM" id="SSF52374">
    <property type="entry name" value="Nucleotidylyl transferase"/>
    <property type="match status" value="1"/>
</dbReference>
<sequence length="484" mass="53364">MTLRFYDTASAEVRDFVPLEDGKASVYYCGATVQGMPHVGHVRSAIAFDQLTRWLEFRGLRVTVVRNVTDIDDKILAKSAQSFGPDWDAEPSARQTEEWWALAYRYEQEFENAYESLGVQRPTYEPRATGHIPEMHTLIQRLIDRGHAYPALDDSGDVYFDVRSWSKYGSLTRQNIDDMQGAPDADPRGKRDPRDFALWKGFKDGEPVTAKWESPWGAGRPGWHLECSAMVTKYLGPRFDIHGGGLDLRFPHHENEMAQSQAAGDEFANFWMHNGMVTYEGEKMSKSIGNTVSPAEMLELASPRVVRYYLGQAHYRSILDYRPTSLQEAAAAVERIDGFIHKASSKVGTGAPDVSPQANMPAAFIAAMDDDLNVPQALGVLHETVRAGNTALASGDLEGAKAALYSVLSMTEVLGLDSVKRPEAVQGREHAALEVLIEAQLEARAAARANKDWAASDAIRDTLAAAGVVVEDGADGATWSLKRD</sequence>
<protein>
    <recommendedName>
        <fullName evidence="1">Cysteine--tRNA ligase</fullName>
        <ecNumber evidence="1">6.1.1.16</ecNumber>
    </recommendedName>
    <alternativeName>
        <fullName evidence="1">Cysteinyl-tRNA synthetase</fullName>
        <shortName evidence="1">CysRS</shortName>
    </alternativeName>
</protein>
<proteinExistence type="inferred from homology"/>